<keyword id="KW-0067">ATP-binding</keyword>
<keyword id="KW-0997">Cell inner membrane</keyword>
<keyword id="KW-1003">Cell membrane</keyword>
<keyword id="KW-0963">Cytoplasm</keyword>
<keyword id="KW-0472">Membrane</keyword>
<keyword id="KW-0479">Metal-binding</keyword>
<keyword id="KW-0547">Nucleotide-binding</keyword>
<keyword id="KW-0653">Protein transport</keyword>
<keyword id="KW-1185">Reference proteome</keyword>
<keyword id="KW-1278">Translocase</keyword>
<keyword id="KW-0811">Translocation</keyword>
<keyword id="KW-0813">Transport</keyword>
<keyword id="KW-0862">Zinc</keyword>
<gene>
    <name evidence="1" type="primary">secA</name>
    <name type="ordered locus">Pcar_2323</name>
</gene>
<sequence length="896" mass="100834">MFENILTKIFGSKNERDLKRLQPLVAHIGSLESELETLSEEQLAGKTVEFRQRLAEGASLDSLLPEAFAVVREAGKRVLGMRHFDVQLIGGMVLHKGKIAEMKTGEGKTLVATLAAYLNALPAKGVHVITVNDYLASRDAEWMGRIHRYLGLTVGCIVHGLDDRQRKEAYACDITYGTNNEFGFDYLRDNMKFSLDDYVQRPLSYAIVDEVDSILIDEARTPLIISGPSESSSELYYSVNRIIPMLEKGETIESRDGRVGQTVREYTGDFTIDEKAKTASLTEDGVAKVERLLGVENLYDPGNIELLHHVNQALKAHALFKRDVDYVVKDGEVMIVDEFTGRLMPGRRWSDGLHQAVEAKEGVKIESENQTLATITFQNYFRMYDKLAGMTGTADTEATEFNQIYSLDVMVIPTNRPLARKDEGDVIYKTNREKFLAVVEDIIERHAGGQPILVGTISIENSEVLSSMLRKRGVPHNVLNAKHHEREAEIVAQAGRKGAVTIATNMAGRGTDIILGGNPDLLAQRESAGAENPEAALAQALVKYQEVCAQEKQDVLAAGGLYILGTERHESRRIDNQLRGRAGRQGDPGASRFYLSLEDDLLRIFGSHRVAYIMDRLKIPEGEPIEHRFISKAIANAQKKVEAHNFDIRKHLIEYDDVMNTQRNVIYAQRREVLGGEQLPETFAAIIDEMVEDIVATFCPEKSAPEDWGWASLNEDFFSQFNMPPAPLEVPASDLTPTVMLEHLKQQVDARLQEREAEFTPPVMLHLMKVLLLQTIDAQWKDHLLSIDHLKEGIGLRGYAQRNPKEEYKREAYELFLQMMGRIRQEVVQKLFRIQLAKEQDVERMEQRQRRHRISLNRAGGEAEAAKPVVRDEKKVGRNDPCPCGSGLKYKKCCGQ</sequence>
<accession>Q3A245</accession>
<comment type="function">
    <text evidence="1">Part of the Sec protein translocase complex. Interacts with the SecYEG preprotein conducting channel. Has a central role in coupling the hydrolysis of ATP to the transfer of proteins into and across the cell membrane, serving as an ATP-driven molecular motor driving the stepwise translocation of polypeptide chains across the membrane.</text>
</comment>
<comment type="catalytic activity">
    <reaction evidence="1">
        <text>ATP + H2O + cellular proteinSide 1 = ADP + phosphate + cellular proteinSide 2.</text>
        <dbReference type="EC" id="7.4.2.8"/>
    </reaction>
</comment>
<comment type="cofactor">
    <cofactor evidence="1">
        <name>Zn(2+)</name>
        <dbReference type="ChEBI" id="CHEBI:29105"/>
    </cofactor>
    <text evidence="1">May bind 1 zinc ion per subunit.</text>
</comment>
<comment type="subunit">
    <text evidence="1">Monomer and homodimer. Part of the essential Sec protein translocation apparatus which comprises SecA, SecYEG and auxiliary proteins SecDF-YajC and YidC.</text>
</comment>
<comment type="subcellular location">
    <subcellularLocation>
        <location evidence="1">Cell inner membrane</location>
        <topology evidence="1">Peripheral membrane protein</topology>
        <orientation evidence="1">Cytoplasmic side</orientation>
    </subcellularLocation>
    <subcellularLocation>
        <location evidence="1">Cytoplasm</location>
    </subcellularLocation>
    <text evidence="1">Distribution is 50-50.</text>
</comment>
<comment type="similarity">
    <text evidence="1">Belongs to the SecA family.</text>
</comment>
<evidence type="ECO:0000255" key="1">
    <source>
        <dbReference type="HAMAP-Rule" id="MF_01382"/>
    </source>
</evidence>
<evidence type="ECO:0000256" key="2">
    <source>
        <dbReference type="SAM" id="MobiDB-lite"/>
    </source>
</evidence>
<name>SECA_SYNC1</name>
<dbReference type="EC" id="7.4.2.8" evidence="1"/>
<dbReference type="EMBL" id="CP000142">
    <property type="protein sequence ID" value="ABA89562.1"/>
    <property type="molecule type" value="Genomic_DNA"/>
</dbReference>
<dbReference type="RefSeq" id="WP_011342084.1">
    <property type="nucleotide sequence ID" value="NC_007498.2"/>
</dbReference>
<dbReference type="SMR" id="Q3A245"/>
<dbReference type="STRING" id="338963.Pcar_2323"/>
<dbReference type="KEGG" id="pca:Pcar_2323"/>
<dbReference type="eggNOG" id="COG0653">
    <property type="taxonomic scope" value="Bacteria"/>
</dbReference>
<dbReference type="HOGENOM" id="CLU_005314_3_0_7"/>
<dbReference type="OrthoDB" id="9805579at2"/>
<dbReference type="Proteomes" id="UP000002534">
    <property type="component" value="Chromosome"/>
</dbReference>
<dbReference type="GO" id="GO:0031522">
    <property type="term" value="C:cell envelope Sec protein transport complex"/>
    <property type="evidence" value="ECO:0007669"/>
    <property type="project" value="TreeGrafter"/>
</dbReference>
<dbReference type="GO" id="GO:0005829">
    <property type="term" value="C:cytosol"/>
    <property type="evidence" value="ECO:0007669"/>
    <property type="project" value="TreeGrafter"/>
</dbReference>
<dbReference type="GO" id="GO:0005886">
    <property type="term" value="C:plasma membrane"/>
    <property type="evidence" value="ECO:0007669"/>
    <property type="project" value="UniProtKB-SubCell"/>
</dbReference>
<dbReference type="GO" id="GO:0005524">
    <property type="term" value="F:ATP binding"/>
    <property type="evidence" value="ECO:0007669"/>
    <property type="project" value="UniProtKB-UniRule"/>
</dbReference>
<dbReference type="GO" id="GO:0046872">
    <property type="term" value="F:metal ion binding"/>
    <property type="evidence" value="ECO:0007669"/>
    <property type="project" value="UniProtKB-KW"/>
</dbReference>
<dbReference type="GO" id="GO:0008564">
    <property type="term" value="F:protein-exporting ATPase activity"/>
    <property type="evidence" value="ECO:0007669"/>
    <property type="project" value="UniProtKB-EC"/>
</dbReference>
<dbReference type="GO" id="GO:0065002">
    <property type="term" value="P:intracellular protein transmembrane transport"/>
    <property type="evidence" value="ECO:0007669"/>
    <property type="project" value="UniProtKB-UniRule"/>
</dbReference>
<dbReference type="GO" id="GO:0017038">
    <property type="term" value="P:protein import"/>
    <property type="evidence" value="ECO:0007669"/>
    <property type="project" value="InterPro"/>
</dbReference>
<dbReference type="GO" id="GO:0006605">
    <property type="term" value="P:protein targeting"/>
    <property type="evidence" value="ECO:0007669"/>
    <property type="project" value="UniProtKB-UniRule"/>
</dbReference>
<dbReference type="GO" id="GO:0043952">
    <property type="term" value="P:protein transport by the Sec complex"/>
    <property type="evidence" value="ECO:0007669"/>
    <property type="project" value="TreeGrafter"/>
</dbReference>
<dbReference type="CDD" id="cd17928">
    <property type="entry name" value="DEXDc_SecA"/>
    <property type="match status" value="1"/>
</dbReference>
<dbReference type="CDD" id="cd18803">
    <property type="entry name" value="SF2_C_secA"/>
    <property type="match status" value="1"/>
</dbReference>
<dbReference type="FunFam" id="3.40.50.300:FF:000113">
    <property type="entry name" value="Preprotein translocase subunit SecA"/>
    <property type="match status" value="1"/>
</dbReference>
<dbReference type="FunFam" id="3.40.50.300:FF:000246">
    <property type="entry name" value="Preprotein translocase subunit SecA"/>
    <property type="match status" value="1"/>
</dbReference>
<dbReference type="FunFam" id="3.90.1440.10:FF:000001">
    <property type="entry name" value="Preprotein translocase subunit SecA"/>
    <property type="match status" value="1"/>
</dbReference>
<dbReference type="FunFam" id="1.10.3060.10:FF:000003">
    <property type="entry name" value="Protein translocase subunit SecA"/>
    <property type="match status" value="1"/>
</dbReference>
<dbReference type="FunFam" id="3.40.50.300:FF:000334">
    <property type="entry name" value="Protein translocase subunit SecA"/>
    <property type="match status" value="1"/>
</dbReference>
<dbReference type="Gene3D" id="1.10.3060.10">
    <property type="entry name" value="Helical scaffold and wing domains of SecA"/>
    <property type="match status" value="1"/>
</dbReference>
<dbReference type="Gene3D" id="3.40.50.300">
    <property type="entry name" value="P-loop containing nucleotide triphosphate hydrolases"/>
    <property type="match status" value="2"/>
</dbReference>
<dbReference type="Gene3D" id="3.90.1440.10">
    <property type="entry name" value="SecA, preprotein cross-linking domain"/>
    <property type="match status" value="1"/>
</dbReference>
<dbReference type="HAMAP" id="MF_01382">
    <property type="entry name" value="SecA"/>
    <property type="match status" value="1"/>
</dbReference>
<dbReference type="InterPro" id="IPR014001">
    <property type="entry name" value="Helicase_ATP-bd"/>
</dbReference>
<dbReference type="InterPro" id="IPR001650">
    <property type="entry name" value="Helicase_C-like"/>
</dbReference>
<dbReference type="InterPro" id="IPR027417">
    <property type="entry name" value="P-loop_NTPase"/>
</dbReference>
<dbReference type="InterPro" id="IPR004027">
    <property type="entry name" value="SEC_C_motif"/>
</dbReference>
<dbReference type="InterPro" id="IPR000185">
    <property type="entry name" value="SecA"/>
</dbReference>
<dbReference type="InterPro" id="IPR020937">
    <property type="entry name" value="SecA_CS"/>
</dbReference>
<dbReference type="InterPro" id="IPR011115">
    <property type="entry name" value="SecA_DEAD"/>
</dbReference>
<dbReference type="InterPro" id="IPR014018">
    <property type="entry name" value="SecA_motor_DEAD"/>
</dbReference>
<dbReference type="InterPro" id="IPR011130">
    <property type="entry name" value="SecA_preprotein_X-link_dom"/>
</dbReference>
<dbReference type="InterPro" id="IPR044722">
    <property type="entry name" value="SecA_SF2_C"/>
</dbReference>
<dbReference type="InterPro" id="IPR011116">
    <property type="entry name" value="SecA_Wing/Scaffold"/>
</dbReference>
<dbReference type="InterPro" id="IPR036266">
    <property type="entry name" value="SecA_Wing/Scaffold_sf"/>
</dbReference>
<dbReference type="InterPro" id="IPR036670">
    <property type="entry name" value="SecA_X-link_sf"/>
</dbReference>
<dbReference type="NCBIfam" id="NF009538">
    <property type="entry name" value="PRK12904.1"/>
    <property type="match status" value="1"/>
</dbReference>
<dbReference type="NCBIfam" id="TIGR00963">
    <property type="entry name" value="secA"/>
    <property type="match status" value="1"/>
</dbReference>
<dbReference type="PANTHER" id="PTHR30612:SF0">
    <property type="entry name" value="CHLOROPLAST PROTEIN-TRANSPORTING ATPASE"/>
    <property type="match status" value="1"/>
</dbReference>
<dbReference type="PANTHER" id="PTHR30612">
    <property type="entry name" value="SECA INNER MEMBRANE COMPONENT OF SEC PROTEIN SECRETION SYSTEM"/>
    <property type="match status" value="1"/>
</dbReference>
<dbReference type="Pfam" id="PF21090">
    <property type="entry name" value="P-loop_SecA"/>
    <property type="match status" value="1"/>
</dbReference>
<dbReference type="Pfam" id="PF02810">
    <property type="entry name" value="SEC-C"/>
    <property type="match status" value="1"/>
</dbReference>
<dbReference type="Pfam" id="PF07517">
    <property type="entry name" value="SecA_DEAD"/>
    <property type="match status" value="1"/>
</dbReference>
<dbReference type="Pfam" id="PF01043">
    <property type="entry name" value="SecA_PP_bind"/>
    <property type="match status" value="1"/>
</dbReference>
<dbReference type="Pfam" id="PF07516">
    <property type="entry name" value="SecA_SW"/>
    <property type="match status" value="1"/>
</dbReference>
<dbReference type="PRINTS" id="PR00906">
    <property type="entry name" value="SECA"/>
</dbReference>
<dbReference type="SMART" id="SM00957">
    <property type="entry name" value="SecA_DEAD"/>
    <property type="match status" value="1"/>
</dbReference>
<dbReference type="SMART" id="SM00958">
    <property type="entry name" value="SecA_PP_bind"/>
    <property type="match status" value="1"/>
</dbReference>
<dbReference type="SUPFAM" id="SSF81886">
    <property type="entry name" value="Helical scaffold and wing domains of SecA"/>
    <property type="match status" value="1"/>
</dbReference>
<dbReference type="SUPFAM" id="SSF52540">
    <property type="entry name" value="P-loop containing nucleoside triphosphate hydrolases"/>
    <property type="match status" value="2"/>
</dbReference>
<dbReference type="SUPFAM" id="SSF81767">
    <property type="entry name" value="Pre-protein crosslinking domain of SecA"/>
    <property type="match status" value="1"/>
</dbReference>
<dbReference type="PROSITE" id="PS01312">
    <property type="entry name" value="SECA"/>
    <property type="match status" value="1"/>
</dbReference>
<dbReference type="PROSITE" id="PS51196">
    <property type="entry name" value="SECA_MOTOR_DEAD"/>
    <property type="match status" value="1"/>
</dbReference>
<organism>
    <name type="scientific">Syntrophotalea carbinolica (strain DSM 2380 / NBRC 103641 / GraBd1)</name>
    <name type="common">Pelobacter carbinolicus</name>
    <dbReference type="NCBI Taxonomy" id="338963"/>
    <lineage>
        <taxon>Bacteria</taxon>
        <taxon>Pseudomonadati</taxon>
        <taxon>Thermodesulfobacteriota</taxon>
        <taxon>Desulfuromonadia</taxon>
        <taxon>Desulfuromonadales</taxon>
        <taxon>Syntrophotaleaceae</taxon>
        <taxon>Syntrophotalea</taxon>
    </lineage>
</organism>
<protein>
    <recommendedName>
        <fullName evidence="1">Protein translocase subunit SecA</fullName>
        <ecNumber evidence="1">7.4.2.8</ecNumber>
    </recommendedName>
</protein>
<proteinExistence type="inferred from homology"/>
<feature type="chain" id="PRO_0000318401" description="Protein translocase subunit SecA">
    <location>
        <begin position="1"/>
        <end position="896"/>
    </location>
</feature>
<feature type="region of interest" description="Disordered" evidence="2">
    <location>
        <begin position="858"/>
        <end position="886"/>
    </location>
</feature>
<feature type="compositionally biased region" description="Basic and acidic residues" evidence="2">
    <location>
        <begin position="869"/>
        <end position="878"/>
    </location>
</feature>
<feature type="binding site" evidence="1">
    <location>
        <position position="87"/>
    </location>
    <ligand>
        <name>ATP</name>
        <dbReference type="ChEBI" id="CHEBI:30616"/>
    </ligand>
</feature>
<feature type="binding site" evidence="1">
    <location>
        <begin position="105"/>
        <end position="109"/>
    </location>
    <ligand>
        <name>ATP</name>
        <dbReference type="ChEBI" id="CHEBI:30616"/>
    </ligand>
</feature>
<feature type="binding site" evidence="1">
    <location>
        <position position="512"/>
    </location>
    <ligand>
        <name>ATP</name>
        <dbReference type="ChEBI" id="CHEBI:30616"/>
    </ligand>
</feature>
<feature type="binding site" evidence="1">
    <location>
        <position position="882"/>
    </location>
    <ligand>
        <name>Zn(2+)</name>
        <dbReference type="ChEBI" id="CHEBI:29105"/>
    </ligand>
</feature>
<feature type="binding site" evidence="1">
    <location>
        <position position="884"/>
    </location>
    <ligand>
        <name>Zn(2+)</name>
        <dbReference type="ChEBI" id="CHEBI:29105"/>
    </ligand>
</feature>
<feature type="binding site" evidence="1">
    <location>
        <position position="893"/>
    </location>
    <ligand>
        <name>Zn(2+)</name>
        <dbReference type="ChEBI" id="CHEBI:29105"/>
    </ligand>
</feature>
<feature type="binding site" evidence="1">
    <location>
        <position position="894"/>
    </location>
    <ligand>
        <name>Zn(2+)</name>
        <dbReference type="ChEBI" id="CHEBI:29105"/>
    </ligand>
</feature>
<reference key="1">
    <citation type="submission" date="2005-10" db="EMBL/GenBank/DDBJ databases">
        <title>Complete sequence of Pelobacter carbinolicus DSM 2380.</title>
        <authorList>
            <person name="Copeland A."/>
            <person name="Lucas S."/>
            <person name="Lapidus A."/>
            <person name="Barry K."/>
            <person name="Detter J.C."/>
            <person name="Glavina T."/>
            <person name="Hammon N."/>
            <person name="Israni S."/>
            <person name="Pitluck S."/>
            <person name="Chertkov O."/>
            <person name="Schmutz J."/>
            <person name="Larimer F."/>
            <person name="Land M."/>
            <person name="Kyrpides N."/>
            <person name="Ivanova N."/>
            <person name="Richardson P."/>
        </authorList>
    </citation>
    <scope>NUCLEOTIDE SEQUENCE [LARGE SCALE GENOMIC DNA]</scope>
    <source>
        <strain>DSM 2380 / NBRC 103641 / GraBd1</strain>
    </source>
</reference>